<comment type="cofactor">
    <cofactor evidence="1">
        <name>Zn(2+)</name>
        <dbReference type="ChEBI" id="CHEBI:29105"/>
    </cofactor>
    <text evidence="1">Binds 1 zinc ion.</text>
</comment>
<comment type="subcellular location">
    <subcellularLocation>
        <location evidence="1">Cytoplasm</location>
    </subcellularLocation>
</comment>
<comment type="similarity">
    <text evidence="1">Belongs to the SprT family.</text>
</comment>
<evidence type="ECO:0000255" key="1">
    <source>
        <dbReference type="HAMAP-Rule" id="MF_00745"/>
    </source>
</evidence>
<feature type="chain" id="PRO_1000046511" description="Protein SprT-like">
    <location>
        <begin position="1"/>
        <end position="154"/>
    </location>
</feature>
<feature type="domain" description="SprT-like" evidence="1">
    <location>
        <begin position="6"/>
        <end position="144"/>
    </location>
</feature>
<feature type="active site" evidence="1">
    <location>
        <position position="68"/>
    </location>
</feature>
<feature type="binding site" evidence="1">
    <location>
        <position position="67"/>
    </location>
    <ligand>
        <name>Zn(2+)</name>
        <dbReference type="ChEBI" id="CHEBI:29105"/>
    </ligand>
</feature>
<feature type="binding site" evidence="1">
    <location>
        <position position="71"/>
    </location>
    <ligand>
        <name>Zn(2+)</name>
        <dbReference type="ChEBI" id="CHEBI:29105"/>
    </ligand>
</feature>
<accession>Q5WJU6</accession>
<gene>
    <name type="ordered locus">ABC0820</name>
</gene>
<proteinExistence type="inferred from homology"/>
<protein>
    <recommendedName>
        <fullName evidence="1">Protein SprT-like</fullName>
    </recommendedName>
</protein>
<keyword id="KW-0963">Cytoplasm</keyword>
<keyword id="KW-0479">Metal-binding</keyword>
<keyword id="KW-1185">Reference proteome</keyword>
<keyword id="KW-0862">Zinc</keyword>
<dbReference type="EMBL" id="AP006627">
    <property type="protein sequence ID" value="BAD63359.1"/>
    <property type="molecule type" value="Genomic_DNA"/>
</dbReference>
<dbReference type="RefSeq" id="WP_011245675.1">
    <property type="nucleotide sequence ID" value="NC_006582.1"/>
</dbReference>
<dbReference type="SMR" id="Q5WJU6"/>
<dbReference type="STRING" id="66692.ABC0820"/>
<dbReference type="KEGG" id="bcl:ABC0820"/>
<dbReference type="eggNOG" id="COG3091">
    <property type="taxonomic scope" value="Bacteria"/>
</dbReference>
<dbReference type="HOGENOM" id="CLU_123820_0_0_9"/>
<dbReference type="OrthoDB" id="9799909at2"/>
<dbReference type="Proteomes" id="UP000001168">
    <property type="component" value="Chromosome"/>
</dbReference>
<dbReference type="GO" id="GO:0005737">
    <property type="term" value="C:cytoplasm"/>
    <property type="evidence" value="ECO:0007669"/>
    <property type="project" value="UniProtKB-SubCell"/>
</dbReference>
<dbReference type="GO" id="GO:0008270">
    <property type="term" value="F:zinc ion binding"/>
    <property type="evidence" value="ECO:0007669"/>
    <property type="project" value="UniProtKB-UniRule"/>
</dbReference>
<dbReference type="GO" id="GO:0006950">
    <property type="term" value="P:response to stress"/>
    <property type="evidence" value="ECO:0007669"/>
    <property type="project" value="UniProtKB-ARBA"/>
</dbReference>
<dbReference type="HAMAP" id="MF_00745">
    <property type="entry name" value="SprT_like"/>
    <property type="match status" value="1"/>
</dbReference>
<dbReference type="InterPro" id="IPR006640">
    <property type="entry name" value="SprT-like_domain"/>
</dbReference>
<dbReference type="InterPro" id="IPR035240">
    <property type="entry name" value="SprT_Zn_ribbon"/>
</dbReference>
<dbReference type="InterPro" id="IPR023524">
    <property type="entry name" value="Uncharacterised_SprT-like"/>
</dbReference>
<dbReference type="NCBIfam" id="NF003339">
    <property type="entry name" value="PRK04351.1"/>
    <property type="match status" value="1"/>
</dbReference>
<dbReference type="Pfam" id="PF10263">
    <property type="entry name" value="SprT-like"/>
    <property type="match status" value="1"/>
</dbReference>
<dbReference type="Pfam" id="PF17283">
    <property type="entry name" value="Zn_ribbon_SprT"/>
    <property type="match status" value="1"/>
</dbReference>
<dbReference type="SMART" id="SM00731">
    <property type="entry name" value="SprT"/>
    <property type="match status" value="1"/>
</dbReference>
<reference key="1">
    <citation type="submission" date="2003-10" db="EMBL/GenBank/DDBJ databases">
        <title>The complete genome sequence of the alkaliphilic Bacillus clausii KSM-K16.</title>
        <authorList>
            <person name="Takaki Y."/>
            <person name="Kageyama Y."/>
            <person name="Shimamura S."/>
            <person name="Suzuki H."/>
            <person name="Nishi S."/>
            <person name="Hatada Y."/>
            <person name="Kawai S."/>
            <person name="Ito S."/>
            <person name="Horikoshi K."/>
        </authorList>
    </citation>
    <scope>NUCLEOTIDE SEQUENCE [LARGE SCALE GENOMIC DNA]</scope>
    <source>
        <strain>KSM-K16</strain>
    </source>
</reference>
<sequence>MTNKELQQLTETISLAFFKRPFTHTARFNNRLRTTGGRYLLKSHDIELNPKQYERYGKEELIGIIKHELCHYHLHLEGKGYKHGDKDFQEWLAKTGAPRYCKTAQDEQTVLVYTCTSCSRTYHRRRKINTQKYVCGTCHGKLKFLSKKVLHQRK</sequence>
<organism>
    <name type="scientific">Shouchella clausii (strain KSM-K16)</name>
    <name type="common">Alkalihalobacillus clausii</name>
    <dbReference type="NCBI Taxonomy" id="66692"/>
    <lineage>
        <taxon>Bacteria</taxon>
        <taxon>Bacillati</taxon>
        <taxon>Bacillota</taxon>
        <taxon>Bacilli</taxon>
        <taxon>Bacillales</taxon>
        <taxon>Bacillaceae</taxon>
        <taxon>Shouchella</taxon>
    </lineage>
</organism>
<name>SPRTL_SHOC1</name>